<sequence>MSLRSWFRGSGTTTPKSSAGPSRATTPPSGVQGTVMTAEQQELADLSDAMQAMAHIMNDDPESAEAHLRQRKDPSSFHLLGLGVSIFMRSILGFEKDVMAEASKCIADCETRSWNDKVKGERREPATDGRLFPNGSEFAIVYAQALLMNAVVSVLHESLTDALKAFYKLRKAMAVMSSISAAEEKIMKEQGASSARGNPFEQASTASGSGNLAAEDEDSDLEFVDADEKVSPEAPIHVTYDGHTSTKDSTSQPATDAATLEGKLQALEIPDDSDTKSHLSKSAVESQVPSLSASRAPSPGPPPQLTDAASDGSLFTHPIDIFIHSAINMCYGSLMLVLSMVPPAFSRLLGIIGFRGDRDKGLHMLWQSAAHPNMNGAVAGLLLLGYYHGLLAFADVLPSERDVAELAEPDEIVGYPRGRCIELLRVMRERYPASGLWRMEQARVLIGEKKLKEGIEMLEKCGDAKMRQVTALSTFELAVSSICYLDWPRMHSSFVRMVELNDWSHALYYFIAGCAHLEMYRDAVHELGGLSELSEDGSESEKEVKAGDVKVTATKDRLDVEDIRKKELISNARKYKKSAETLFRKAPTTAGRKRFMARQMPFEVFVMRKVAKWEERATALKLDLADAIGPSPAAEMIYLWNGGKRMNLELIEKAMTILEWDRCTSSATVAKVKEEHDEVAIHGVGQAALLRHAGRGDEAKGILLDISAYDRATCKGGNKDDYILASATYELAMLAWDDVCRPERWPTDADEVEEFRRKKTEECYTLLETVAKWETYVLDARFGMRVQTGLDTVRWLSKKKGWTL</sequence>
<accession>A4QTI0</accession>
<accession>G4N451</accession>
<reference key="1">
    <citation type="journal article" date="2005" name="Nature">
        <title>The genome sequence of the rice blast fungus Magnaporthe grisea.</title>
        <authorList>
            <person name="Dean R.A."/>
            <person name="Talbot N.J."/>
            <person name="Ebbole D.J."/>
            <person name="Farman M.L."/>
            <person name="Mitchell T.K."/>
            <person name="Orbach M.J."/>
            <person name="Thon M.R."/>
            <person name="Kulkarni R."/>
            <person name="Xu J.-R."/>
            <person name="Pan H."/>
            <person name="Read N.D."/>
            <person name="Lee Y.-H."/>
            <person name="Carbone I."/>
            <person name="Brown D."/>
            <person name="Oh Y.Y."/>
            <person name="Donofrio N."/>
            <person name="Jeong J.S."/>
            <person name="Soanes D.M."/>
            <person name="Djonovic S."/>
            <person name="Kolomiets E."/>
            <person name="Rehmeyer C."/>
            <person name="Li W."/>
            <person name="Harding M."/>
            <person name="Kim S."/>
            <person name="Lebrun M.-H."/>
            <person name="Bohnert H."/>
            <person name="Coughlan S."/>
            <person name="Butler J."/>
            <person name="Calvo S.E."/>
            <person name="Ma L.-J."/>
            <person name="Nicol R."/>
            <person name="Purcell S."/>
            <person name="Nusbaum C."/>
            <person name="Galagan J.E."/>
            <person name="Birren B.W."/>
        </authorList>
    </citation>
    <scope>NUCLEOTIDE SEQUENCE [LARGE SCALE GENOMIC DNA]</scope>
    <source>
        <strain>70-15 / ATCC MYA-4617 / FGSC 8958</strain>
    </source>
</reference>
<protein>
    <recommendedName>
        <fullName>Inclusion body clearance protein IML2</fullName>
    </recommendedName>
</protein>
<name>IML2_PYRO7</name>
<proteinExistence type="inferred from homology"/>
<dbReference type="EMBL" id="CM001233">
    <property type="protein sequence ID" value="EHA52771.1"/>
    <property type="molecule type" value="Genomic_DNA"/>
</dbReference>
<dbReference type="RefSeq" id="XP_003712578.1">
    <property type="nucleotide sequence ID" value="XM_003712530.1"/>
</dbReference>
<dbReference type="FunCoup" id="A4QTI0">
    <property type="interactions" value="127"/>
</dbReference>
<dbReference type="STRING" id="242507.A4QTI0"/>
<dbReference type="EnsemblFungi" id="MGG_05065T0">
    <property type="protein sequence ID" value="MGG_05065T0"/>
    <property type="gene ID" value="MGG_05065"/>
</dbReference>
<dbReference type="GeneID" id="2675689"/>
<dbReference type="KEGG" id="mgr:MGG_05065"/>
<dbReference type="VEuPathDB" id="FungiDB:MGG_05065"/>
<dbReference type="eggNOG" id="KOG3783">
    <property type="taxonomic scope" value="Eukaryota"/>
</dbReference>
<dbReference type="HOGENOM" id="CLU_014926_1_0_1"/>
<dbReference type="InParanoid" id="A4QTI0"/>
<dbReference type="OMA" id="WNGYNRM"/>
<dbReference type="OrthoDB" id="2154985at2759"/>
<dbReference type="Proteomes" id="UP000009058">
    <property type="component" value="Chromosome 3"/>
</dbReference>
<dbReference type="GO" id="GO:0005737">
    <property type="term" value="C:cytoplasm"/>
    <property type="evidence" value="ECO:0000250"/>
    <property type="project" value="PAMGO_MGG"/>
</dbReference>
<dbReference type="GO" id="GO:0005829">
    <property type="term" value="C:cytosol"/>
    <property type="evidence" value="ECO:0007669"/>
    <property type="project" value="TreeGrafter"/>
</dbReference>
<dbReference type="GO" id="GO:0005741">
    <property type="term" value="C:mitochondrial outer membrane"/>
    <property type="evidence" value="ECO:0007669"/>
    <property type="project" value="TreeGrafter"/>
</dbReference>
<dbReference type="GO" id="GO:0005634">
    <property type="term" value="C:nucleus"/>
    <property type="evidence" value="ECO:0000250"/>
    <property type="project" value="PAMGO_MGG"/>
</dbReference>
<dbReference type="InterPro" id="IPR019412">
    <property type="entry name" value="Iml2/TPR_39"/>
</dbReference>
<dbReference type="PANTHER" id="PTHR31859">
    <property type="entry name" value="TETRATRICOPEPTIDE REPEAT PROTEIN 39 FAMILY MEMBER"/>
    <property type="match status" value="1"/>
</dbReference>
<dbReference type="PANTHER" id="PTHR31859:SF1">
    <property type="entry name" value="TETRATRICOPEPTIDE REPEAT PROTEIN 39C"/>
    <property type="match status" value="1"/>
</dbReference>
<dbReference type="Pfam" id="PF10300">
    <property type="entry name" value="Iml2-TPR_39"/>
    <property type="match status" value="1"/>
</dbReference>
<feature type="chain" id="PRO_0000333351" description="Inclusion body clearance protein IML2">
    <location>
        <begin position="1"/>
        <end position="804"/>
    </location>
</feature>
<feature type="region of interest" description="Disordered" evidence="2">
    <location>
        <begin position="1"/>
        <end position="32"/>
    </location>
</feature>
<feature type="region of interest" description="Disordered" evidence="2">
    <location>
        <begin position="190"/>
        <end position="218"/>
    </location>
</feature>
<feature type="region of interest" description="Disordered" evidence="2">
    <location>
        <begin position="232"/>
        <end position="257"/>
    </location>
</feature>
<feature type="region of interest" description="Disordered" evidence="2">
    <location>
        <begin position="271"/>
        <end position="310"/>
    </location>
</feature>
<feature type="compositionally biased region" description="Polar residues" evidence="2">
    <location>
        <begin position="10"/>
        <end position="32"/>
    </location>
</feature>
<feature type="compositionally biased region" description="Polar residues" evidence="2">
    <location>
        <begin position="191"/>
        <end position="210"/>
    </location>
</feature>
<comment type="function">
    <text evidence="1">Inclusion body (IB) resident protein that interacts strongly with lipid droplet (LD) proteins. Involved in LD-mediated IB clearing after protein folding stress, probably by enabling access to the IBs of an LD-stored soluble sterol derivative that acts as a chaperone in inclusion clearing.</text>
</comment>
<comment type="subunit">
    <text evidence="1">Interacts with lipid droplet proteins.</text>
</comment>
<comment type="subcellular location">
    <subcellularLocation>
        <location evidence="1">Cytoplasm</location>
    </subcellularLocation>
    <subcellularLocation>
        <location evidence="1">Nucleus</location>
    </subcellularLocation>
    <text evidence="1">Localized exclusively in cytoplasmic inclusion bodies under protein folding stress conditions.</text>
</comment>
<comment type="similarity">
    <text evidence="3">Belongs to the IML2 family.</text>
</comment>
<organism>
    <name type="scientific">Pyricularia oryzae (strain 70-15 / ATCC MYA-4617 / FGSC 8958)</name>
    <name type="common">Rice blast fungus</name>
    <name type="synonym">Magnaporthe oryzae</name>
    <dbReference type="NCBI Taxonomy" id="242507"/>
    <lineage>
        <taxon>Eukaryota</taxon>
        <taxon>Fungi</taxon>
        <taxon>Dikarya</taxon>
        <taxon>Ascomycota</taxon>
        <taxon>Pezizomycotina</taxon>
        <taxon>Sordariomycetes</taxon>
        <taxon>Sordariomycetidae</taxon>
        <taxon>Magnaporthales</taxon>
        <taxon>Pyriculariaceae</taxon>
        <taxon>Pyricularia</taxon>
    </lineage>
</organism>
<keyword id="KW-0963">Cytoplasm</keyword>
<keyword id="KW-0539">Nucleus</keyword>
<keyword id="KW-0597">Phosphoprotein</keyword>
<keyword id="KW-1185">Reference proteome</keyword>
<gene>
    <name type="primary">IML2</name>
    <name type="ORF">MGG_05065</name>
</gene>
<evidence type="ECO:0000250" key="1">
    <source>
        <dbReference type="UniProtKB" id="P47031"/>
    </source>
</evidence>
<evidence type="ECO:0000256" key="2">
    <source>
        <dbReference type="SAM" id="MobiDB-lite"/>
    </source>
</evidence>
<evidence type="ECO:0000305" key="3"/>